<accession>Q9SRV1</accession>
<accession>Q8LGI9</accession>
<proteinExistence type="evidence at protein level"/>
<comment type="function">
    <text evidence="1">May act as a substrate-specific adapter of an E3 ubiquitin-protein ligase complex (CUL3-RBX1-BTB) which mediates the ubiquitination and subsequent proteasomal degradation of target proteins.</text>
</comment>
<comment type="pathway">
    <text>Protein modification; protein ubiquitination.</text>
</comment>
<comment type="subunit">
    <text evidence="5 6">Interacts with RAP2-4 (PubMed:19843165). Binds to MYB56 at the promoter of FLOWERING LOCUS T (FT) (PubMed:25343985).</text>
</comment>
<comment type="subcellular location">
    <subcellularLocation>
        <location evidence="5">Cytoplasm</location>
    </subcellularLocation>
</comment>
<comment type="tissue specificity">
    <text evidence="5">Ubiquitous.</text>
</comment>
<comment type="induction">
    <text evidence="5">By drought.</text>
</comment>
<comment type="domain">
    <text>The BTB/POZ domain mediates the interaction with some component of ubiquitin ligase complexes.</text>
</comment>
<comment type="similarity">
    <text evidence="7">Belongs to the Tdpoz family.</text>
</comment>
<comment type="sequence caution" evidence="7">
    <conflict type="erroneous initiation">
        <sequence resource="EMBL-CDS" id="AAM60841"/>
    </conflict>
    <text>Truncated N-terminus.</text>
</comment>
<protein>
    <recommendedName>
        <fullName>BTB/POZ and MATH domain-containing protein 4</fullName>
    </recommendedName>
    <alternativeName>
        <fullName>Protein BTB-POZ AND MATH DOMAIN 4</fullName>
        <shortName>AtBPM4</shortName>
    </alternativeName>
</protein>
<feature type="chain" id="PRO_0000405268" description="BTB/POZ and MATH domain-containing protein 4">
    <location>
        <begin position="1"/>
        <end position="465"/>
    </location>
</feature>
<feature type="domain" description="MATH" evidence="3">
    <location>
        <begin position="46"/>
        <end position="180"/>
    </location>
</feature>
<feature type="domain" description="BTB" evidence="2">
    <location>
        <begin position="216"/>
        <end position="282"/>
    </location>
</feature>
<feature type="region of interest" description="Disordered" evidence="4">
    <location>
        <begin position="12"/>
        <end position="40"/>
    </location>
</feature>
<feature type="region of interest" description="Disordered" evidence="4">
    <location>
        <begin position="395"/>
        <end position="429"/>
    </location>
</feature>
<feature type="region of interest" description="Disordered" evidence="4">
    <location>
        <begin position="441"/>
        <end position="465"/>
    </location>
</feature>
<feature type="compositionally biased region" description="Low complexity" evidence="4">
    <location>
        <begin position="442"/>
        <end position="458"/>
    </location>
</feature>
<name>BPM4_ARATH</name>
<reference key="1">
    <citation type="journal article" date="2000" name="Nature">
        <title>Sequence and analysis of chromosome 3 of the plant Arabidopsis thaliana.</title>
        <authorList>
            <person name="Salanoubat M."/>
            <person name="Lemcke K."/>
            <person name="Rieger M."/>
            <person name="Ansorge W."/>
            <person name="Unseld M."/>
            <person name="Fartmann B."/>
            <person name="Valle G."/>
            <person name="Bloecker H."/>
            <person name="Perez-Alonso M."/>
            <person name="Obermaier B."/>
            <person name="Delseny M."/>
            <person name="Boutry M."/>
            <person name="Grivell L.A."/>
            <person name="Mache R."/>
            <person name="Puigdomenech P."/>
            <person name="De Simone V."/>
            <person name="Choisne N."/>
            <person name="Artiguenave F."/>
            <person name="Robert C."/>
            <person name="Brottier P."/>
            <person name="Wincker P."/>
            <person name="Cattolico L."/>
            <person name="Weissenbach J."/>
            <person name="Saurin W."/>
            <person name="Quetier F."/>
            <person name="Schaefer M."/>
            <person name="Mueller-Auer S."/>
            <person name="Gabel C."/>
            <person name="Fuchs M."/>
            <person name="Benes V."/>
            <person name="Wurmbach E."/>
            <person name="Drzonek H."/>
            <person name="Erfle H."/>
            <person name="Jordan N."/>
            <person name="Bangert S."/>
            <person name="Wiedelmann R."/>
            <person name="Kranz H."/>
            <person name="Voss H."/>
            <person name="Holland R."/>
            <person name="Brandt P."/>
            <person name="Nyakatura G."/>
            <person name="Vezzi A."/>
            <person name="D'Angelo M."/>
            <person name="Pallavicini A."/>
            <person name="Toppo S."/>
            <person name="Simionati B."/>
            <person name="Conrad A."/>
            <person name="Hornischer K."/>
            <person name="Kauer G."/>
            <person name="Loehnert T.-H."/>
            <person name="Nordsiek G."/>
            <person name="Reichelt J."/>
            <person name="Scharfe M."/>
            <person name="Schoen O."/>
            <person name="Bargues M."/>
            <person name="Terol J."/>
            <person name="Climent J."/>
            <person name="Navarro P."/>
            <person name="Collado C."/>
            <person name="Perez-Perez A."/>
            <person name="Ottenwaelder B."/>
            <person name="Duchemin D."/>
            <person name="Cooke R."/>
            <person name="Laudie M."/>
            <person name="Berger-Llauro C."/>
            <person name="Purnelle B."/>
            <person name="Masuy D."/>
            <person name="de Haan M."/>
            <person name="Maarse A.C."/>
            <person name="Alcaraz J.-P."/>
            <person name="Cottet A."/>
            <person name="Casacuberta E."/>
            <person name="Monfort A."/>
            <person name="Argiriou A."/>
            <person name="Flores M."/>
            <person name="Liguori R."/>
            <person name="Vitale D."/>
            <person name="Mannhaupt G."/>
            <person name="Haase D."/>
            <person name="Schoof H."/>
            <person name="Rudd S."/>
            <person name="Zaccaria P."/>
            <person name="Mewes H.-W."/>
            <person name="Mayer K.F.X."/>
            <person name="Kaul S."/>
            <person name="Town C.D."/>
            <person name="Koo H.L."/>
            <person name="Tallon L.J."/>
            <person name="Jenkins J."/>
            <person name="Rooney T."/>
            <person name="Rizzo M."/>
            <person name="Walts A."/>
            <person name="Utterback T."/>
            <person name="Fujii C.Y."/>
            <person name="Shea T.P."/>
            <person name="Creasy T.H."/>
            <person name="Haas B."/>
            <person name="Maiti R."/>
            <person name="Wu D."/>
            <person name="Peterson J."/>
            <person name="Van Aken S."/>
            <person name="Pai G."/>
            <person name="Militscher J."/>
            <person name="Sellers P."/>
            <person name="Gill J.E."/>
            <person name="Feldblyum T.V."/>
            <person name="Preuss D."/>
            <person name="Lin X."/>
            <person name="Nierman W.C."/>
            <person name="Salzberg S.L."/>
            <person name="White O."/>
            <person name="Venter J.C."/>
            <person name="Fraser C.M."/>
            <person name="Kaneko T."/>
            <person name="Nakamura Y."/>
            <person name="Sato S."/>
            <person name="Kato T."/>
            <person name="Asamizu E."/>
            <person name="Sasamoto S."/>
            <person name="Kimura T."/>
            <person name="Idesawa K."/>
            <person name="Kawashima K."/>
            <person name="Kishida Y."/>
            <person name="Kiyokawa C."/>
            <person name="Kohara M."/>
            <person name="Matsumoto M."/>
            <person name="Matsuno A."/>
            <person name="Muraki A."/>
            <person name="Nakayama S."/>
            <person name="Nakazaki N."/>
            <person name="Shinpo S."/>
            <person name="Takeuchi C."/>
            <person name="Wada T."/>
            <person name="Watanabe A."/>
            <person name="Yamada M."/>
            <person name="Yasuda M."/>
            <person name="Tabata S."/>
        </authorList>
    </citation>
    <scope>NUCLEOTIDE SEQUENCE [LARGE SCALE GENOMIC DNA]</scope>
    <source>
        <strain>cv. Columbia</strain>
    </source>
</reference>
<reference key="2">
    <citation type="journal article" date="2017" name="Plant J.">
        <title>Araport11: a complete reannotation of the Arabidopsis thaliana reference genome.</title>
        <authorList>
            <person name="Cheng C.Y."/>
            <person name="Krishnakumar V."/>
            <person name="Chan A.P."/>
            <person name="Thibaud-Nissen F."/>
            <person name="Schobel S."/>
            <person name="Town C.D."/>
        </authorList>
    </citation>
    <scope>GENOME REANNOTATION</scope>
    <source>
        <strain>cv. Columbia</strain>
    </source>
</reference>
<reference key="3">
    <citation type="journal article" date="2003" name="Science">
        <title>Empirical analysis of transcriptional activity in the Arabidopsis genome.</title>
        <authorList>
            <person name="Yamada K."/>
            <person name="Lim J."/>
            <person name="Dale J.M."/>
            <person name="Chen H."/>
            <person name="Shinn P."/>
            <person name="Palm C.J."/>
            <person name="Southwick A.M."/>
            <person name="Wu H.C."/>
            <person name="Kim C.J."/>
            <person name="Nguyen M."/>
            <person name="Pham P.K."/>
            <person name="Cheuk R.F."/>
            <person name="Karlin-Newmann G."/>
            <person name="Liu S.X."/>
            <person name="Lam B."/>
            <person name="Sakano H."/>
            <person name="Wu T."/>
            <person name="Yu G."/>
            <person name="Miranda M."/>
            <person name="Quach H.L."/>
            <person name="Tripp M."/>
            <person name="Chang C.H."/>
            <person name="Lee J.M."/>
            <person name="Toriumi M.J."/>
            <person name="Chan M.M."/>
            <person name="Tang C.C."/>
            <person name="Onodera C.S."/>
            <person name="Deng J.M."/>
            <person name="Akiyama K."/>
            <person name="Ansari Y."/>
            <person name="Arakawa T."/>
            <person name="Banh J."/>
            <person name="Banno F."/>
            <person name="Bowser L."/>
            <person name="Brooks S.Y."/>
            <person name="Carninci P."/>
            <person name="Chao Q."/>
            <person name="Choy N."/>
            <person name="Enju A."/>
            <person name="Goldsmith A.D."/>
            <person name="Gurjal M."/>
            <person name="Hansen N.F."/>
            <person name="Hayashizaki Y."/>
            <person name="Johnson-Hopson C."/>
            <person name="Hsuan V.W."/>
            <person name="Iida K."/>
            <person name="Karnes M."/>
            <person name="Khan S."/>
            <person name="Koesema E."/>
            <person name="Ishida J."/>
            <person name="Jiang P.X."/>
            <person name="Jones T."/>
            <person name="Kawai J."/>
            <person name="Kamiya A."/>
            <person name="Meyers C."/>
            <person name="Nakajima M."/>
            <person name="Narusaka M."/>
            <person name="Seki M."/>
            <person name="Sakurai T."/>
            <person name="Satou M."/>
            <person name="Tamse R."/>
            <person name="Vaysberg M."/>
            <person name="Wallender E.K."/>
            <person name="Wong C."/>
            <person name="Yamamura Y."/>
            <person name="Yuan S."/>
            <person name="Shinozaki K."/>
            <person name="Davis R.W."/>
            <person name="Theologis A."/>
            <person name="Ecker J.R."/>
        </authorList>
    </citation>
    <scope>NUCLEOTIDE SEQUENCE [LARGE SCALE MRNA]</scope>
    <source>
        <strain>cv. Columbia</strain>
    </source>
</reference>
<reference key="4">
    <citation type="submission" date="2002-03" db="EMBL/GenBank/DDBJ databases">
        <title>Full-length cDNA from Arabidopsis thaliana.</title>
        <authorList>
            <person name="Brover V.V."/>
            <person name="Troukhan M.E."/>
            <person name="Alexandrov N.A."/>
            <person name="Lu Y.-P."/>
            <person name="Flavell R.B."/>
            <person name="Feldmann K.A."/>
        </authorList>
    </citation>
    <scope>NUCLEOTIDE SEQUENCE [LARGE SCALE MRNA] OF 27-465</scope>
</reference>
<reference key="5">
    <citation type="journal article" date="2004" name="Gene">
        <title>TDPOZ, a family of bipartite animal and plant proteins that contain the TRAF (TD) and POZ/BTB domains.</title>
        <authorList>
            <person name="Huang C.-J."/>
            <person name="Chen C.-Y."/>
            <person name="Chen H.-H."/>
            <person name="Tsai S.-F."/>
            <person name="Choo K.-B."/>
        </authorList>
    </citation>
    <scope>GENE FAMILY</scope>
</reference>
<reference key="6">
    <citation type="journal article" date="2005" name="Plant Physiol.">
        <title>Arabidopsis AtCUL3a and AtCUL3b form complexes with members of the BTB/POZ-MATH protein family.</title>
        <authorList>
            <person name="Weber H."/>
            <person name="Bernhardt A."/>
            <person name="Dieterle M."/>
            <person name="Hano P."/>
            <person name="Mutlu A."/>
            <person name="Estelle M."/>
            <person name="Genschik P."/>
            <person name="Hellmann H."/>
        </authorList>
    </citation>
    <scope>GENE FAMILY</scope>
    <scope>NOMENCLATURE</scope>
</reference>
<reference key="7">
    <citation type="journal article" date="2009" name="FEBS J.">
        <title>Arabidopsis thaliana BTB/ POZ-MATH proteins interact with members of the ERF/AP2 transcription factor family.</title>
        <authorList>
            <person name="Weber H."/>
            <person name="Hellmann H."/>
        </authorList>
    </citation>
    <scope>INTERACTION WITH RAP2-4</scope>
    <scope>TISSUE SPECIFICITY</scope>
    <scope>INDUCTION</scope>
    <scope>SUBCELLULAR LOCATION</scope>
</reference>
<reference key="8">
    <citation type="journal article" date="2014" name="Mol. Plant">
        <title>Identification of Arabidopsis MYB56 as a novel substrate for CRL3BPM E3 ligases.</title>
        <authorList>
            <person name="Chen L."/>
            <person name="Bernhardt A."/>
            <person name="Lee J."/>
            <person name="Hellmann H."/>
        </authorList>
    </citation>
    <scope>INTERACTION WITH MYB56</scope>
    <source>
        <strain>cv. Columbia</strain>
    </source>
</reference>
<dbReference type="EMBL" id="AC009540">
    <property type="protein sequence ID" value="AAF00643.1"/>
    <property type="molecule type" value="Genomic_DNA"/>
</dbReference>
<dbReference type="EMBL" id="CP002686">
    <property type="protein sequence ID" value="AEE73980.1"/>
    <property type="molecule type" value="Genomic_DNA"/>
</dbReference>
<dbReference type="EMBL" id="AF367309">
    <property type="protein sequence ID" value="AAK32896.1"/>
    <property type="molecule type" value="mRNA"/>
</dbReference>
<dbReference type="EMBL" id="AY059150">
    <property type="protein sequence ID" value="AAL15375.1"/>
    <property type="molecule type" value="mRNA"/>
</dbReference>
<dbReference type="EMBL" id="AY084246">
    <property type="protein sequence ID" value="AAM60841.1"/>
    <property type="status" value="ALT_INIT"/>
    <property type="molecule type" value="mRNA"/>
</dbReference>
<dbReference type="RefSeq" id="NP_566212.2">
    <property type="nucleotide sequence ID" value="NM_111245.3"/>
</dbReference>
<dbReference type="SMR" id="Q9SRV1"/>
<dbReference type="BioGRID" id="6503">
    <property type="interactions" value="3"/>
</dbReference>
<dbReference type="FunCoup" id="Q9SRV1">
    <property type="interactions" value="2513"/>
</dbReference>
<dbReference type="IntAct" id="Q9SRV1">
    <property type="interactions" value="1"/>
</dbReference>
<dbReference type="MINT" id="Q9SRV1"/>
<dbReference type="STRING" id="3702.Q9SRV1"/>
<dbReference type="iPTMnet" id="Q9SRV1"/>
<dbReference type="PaxDb" id="3702-AT3G03740.1"/>
<dbReference type="ProteomicsDB" id="240503"/>
<dbReference type="EnsemblPlants" id="AT3G03740.1">
    <property type="protein sequence ID" value="AT3G03740.1"/>
    <property type="gene ID" value="AT3G03740"/>
</dbReference>
<dbReference type="GeneID" id="821170"/>
<dbReference type="Gramene" id="AT3G03740.1">
    <property type="protein sequence ID" value="AT3G03740.1"/>
    <property type="gene ID" value="AT3G03740"/>
</dbReference>
<dbReference type="KEGG" id="ath:AT3G03740"/>
<dbReference type="Araport" id="AT3G03740"/>
<dbReference type="TAIR" id="AT3G03740">
    <property type="gene designation" value="BPM4"/>
</dbReference>
<dbReference type="eggNOG" id="KOG1987">
    <property type="taxonomic scope" value="Eukaryota"/>
</dbReference>
<dbReference type="HOGENOM" id="CLU_004253_2_0_1"/>
<dbReference type="InParanoid" id="Q9SRV1"/>
<dbReference type="OMA" id="DRYHAMD"/>
<dbReference type="PhylomeDB" id="Q9SRV1"/>
<dbReference type="UniPathway" id="UPA00143"/>
<dbReference type="PRO" id="PR:Q9SRV1"/>
<dbReference type="Proteomes" id="UP000006548">
    <property type="component" value="Chromosome 3"/>
</dbReference>
<dbReference type="ExpressionAtlas" id="Q9SRV1">
    <property type="expression patterns" value="baseline and differential"/>
</dbReference>
<dbReference type="GO" id="GO:0005829">
    <property type="term" value="C:cytosol"/>
    <property type="evidence" value="ECO:0000314"/>
    <property type="project" value="TAIR"/>
</dbReference>
<dbReference type="GO" id="GO:0071472">
    <property type="term" value="P:cellular response to salt stress"/>
    <property type="evidence" value="ECO:0000270"/>
    <property type="project" value="TAIR"/>
</dbReference>
<dbReference type="GO" id="GO:0042631">
    <property type="term" value="P:cellular response to water deprivation"/>
    <property type="evidence" value="ECO:0000270"/>
    <property type="project" value="TAIR"/>
</dbReference>
<dbReference type="GO" id="GO:0016567">
    <property type="term" value="P:protein ubiquitination"/>
    <property type="evidence" value="ECO:0007669"/>
    <property type="project" value="UniProtKB-UniPathway"/>
</dbReference>
<dbReference type="GO" id="GO:0006970">
    <property type="term" value="P:response to osmotic stress"/>
    <property type="evidence" value="ECO:0000270"/>
    <property type="project" value="TAIR"/>
</dbReference>
<dbReference type="CDD" id="cd14736">
    <property type="entry name" value="BACK_AtBPM-like"/>
    <property type="match status" value="1"/>
</dbReference>
<dbReference type="CDD" id="cd18280">
    <property type="entry name" value="BTB_POZ_BPM_plant"/>
    <property type="match status" value="1"/>
</dbReference>
<dbReference type="CDD" id="cd00121">
    <property type="entry name" value="MATH"/>
    <property type="match status" value="1"/>
</dbReference>
<dbReference type="FunFam" id="1.25.40.420:FF:000023">
    <property type="entry name" value="BTB-POZ and math domain 1"/>
    <property type="match status" value="1"/>
</dbReference>
<dbReference type="FunFam" id="3.30.710.10:FF:000136">
    <property type="entry name" value="BTB-POZ and math domain 1"/>
    <property type="match status" value="1"/>
</dbReference>
<dbReference type="FunFam" id="2.60.210.10:FF:000012">
    <property type="entry name" value="BTB/POZ and MATH domain-containing protein 4"/>
    <property type="match status" value="1"/>
</dbReference>
<dbReference type="Gene3D" id="1.25.40.420">
    <property type="match status" value="1"/>
</dbReference>
<dbReference type="Gene3D" id="2.60.210.10">
    <property type="entry name" value="Apoptosis, Tumor Necrosis Factor Receptor Associated Protein 2, Chain A"/>
    <property type="match status" value="1"/>
</dbReference>
<dbReference type="Gene3D" id="3.30.710.10">
    <property type="entry name" value="Potassium Channel Kv1.1, Chain A"/>
    <property type="match status" value="1"/>
</dbReference>
<dbReference type="InterPro" id="IPR056423">
    <property type="entry name" value="BACK_BPM_SPOP"/>
</dbReference>
<dbReference type="InterPro" id="IPR045005">
    <property type="entry name" value="BPM1-6"/>
</dbReference>
<dbReference type="InterPro" id="IPR034090">
    <property type="entry name" value="BPM_C"/>
</dbReference>
<dbReference type="InterPro" id="IPR000210">
    <property type="entry name" value="BTB/POZ_dom"/>
</dbReference>
<dbReference type="InterPro" id="IPR002083">
    <property type="entry name" value="MATH/TRAF_dom"/>
</dbReference>
<dbReference type="InterPro" id="IPR011333">
    <property type="entry name" value="SKP1/BTB/POZ_sf"/>
</dbReference>
<dbReference type="InterPro" id="IPR008974">
    <property type="entry name" value="TRAF-like"/>
</dbReference>
<dbReference type="PANTHER" id="PTHR26379">
    <property type="entry name" value="BTB/POZ AND MATH DOMAIN-CONTAINING PROTEIN 1"/>
    <property type="match status" value="1"/>
</dbReference>
<dbReference type="PANTHER" id="PTHR26379:SF466">
    <property type="entry name" value="BTB_POZ AND MATH DOMAIN-CONTAINING PROTEIN 4"/>
    <property type="match status" value="1"/>
</dbReference>
<dbReference type="Pfam" id="PF24570">
    <property type="entry name" value="BACK_BPM_SPOP"/>
    <property type="match status" value="1"/>
</dbReference>
<dbReference type="Pfam" id="PF00651">
    <property type="entry name" value="BTB"/>
    <property type="match status" value="1"/>
</dbReference>
<dbReference type="Pfam" id="PF22486">
    <property type="entry name" value="MATH_2"/>
    <property type="match status" value="1"/>
</dbReference>
<dbReference type="SMART" id="SM00225">
    <property type="entry name" value="BTB"/>
    <property type="match status" value="1"/>
</dbReference>
<dbReference type="SMART" id="SM00061">
    <property type="entry name" value="MATH"/>
    <property type="match status" value="1"/>
</dbReference>
<dbReference type="SUPFAM" id="SSF54695">
    <property type="entry name" value="POZ domain"/>
    <property type="match status" value="1"/>
</dbReference>
<dbReference type="SUPFAM" id="SSF49599">
    <property type="entry name" value="TRAF domain-like"/>
    <property type="match status" value="1"/>
</dbReference>
<dbReference type="PROSITE" id="PS50097">
    <property type="entry name" value="BTB"/>
    <property type="match status" value="1"/>
</dbReference>
<dbReference type="PROSITE" id="PS50144">
    <property type="entry name" value="MATH"/>
    <property type="match status" value="1"/>
</dbReference>
<keyword id="KW-0963">Cytoplasm</keyword>
<keyword id="KW-1185">Reference proteome</keyword>
<keyword id="KW-0833">Ubl conjugation pathway</keyword>
<evidence type="ECO:0000250" key="1"/>
<evidence type="ECO:0000255" key="2">
    <source>
        <dbReference type="PROSITE-ProRule" id="PRU00037"/>
    </source>
</evidence>
<evidence type="ECO:0000255" key="3">
    <source>
        <dbReference type="PROSITE-ProRule" id="PRU00129"/>
    </source>
</evidence>
<evidence type="ECO:0000256" key="4">
    <source>
        <dbReference type="SAM" id="MobiDB-lite"/>
    </source>
</evidence>
<evidence type="ECO:0000269" key="5">
    <source>
    </source>
</evidence>
<evidence type="ECO:0000269" key="6">
    <source>
    </source>
</evidence>
<evidence type="ECO:0000305" key="7"/>
<gene>
    <name type="primary">BPM4</name>
    <name type="ordered locus">At3g03740</name>
    <name type="ORF">F20H23.23</name>
</gene>
<organism>
    <name type="scientific">Arabidopsis thaliana</name>
    <name type="common">Mouse-ear cress</name>
    <dbReference type="NCBI Taxonomy" id="3702"/>
    <lineage>
        <taxon>Eukaryota</taxon>
        <taxon>Viridiplantae</taxon>
        <taxon>Streptophyta</taxon>
        <taxon>Embryophyta</taxon>
        <taxon>Tracheophyta</taxon>
        <taxon>Spermatophyta</taxon>
        <taxon>Magnoliopsida</taxon>
        <taxon>eudicotyledons</taxon>
        <taxon>Gunneridae</taxon>
        <taxon>Pentapetalae</taxon>
        <taxon>rosids</taxon>
        <taxon>malvids</taxon>
        <taxon>Brassicales</taxon>
        <taxon>Brassicaceae</taxon>
        <taxon>Camelineae</taxon>
        <taxon>Arabidopsis</taxon>
    </lineage>
</organism>
<sequence>MKSVIFTEEKNLQRQNPLQKSEQQRRNFEMPSPPTTTSLSVTQTINGSHSFTIKGYSLAKGIGIGKHIASDTFTVGGYQWAIYFYPDGKNPEDNSAYVSVFIALASDGTDVRALFELSLLDQSGKGKHKVHSHFDRALESGPYTLKYRGSMWGYKRFFRRLMLETSDFLKDDCLKINCTVGVVVSEIDCPRLHSIHVPASDIGSHFGMLLENEDGSDITFNVSGEKFRAHRLVLAARSPVFESEFLDVTGEEDRDIEVTDMEPKVFKALLHYIYKDALIEDAESSSSSGSSVGPSASDTLAAKLLGAADKYKLPRLSLMCESVLCKDISVDSVANILALADRYNASALKSVCLKFAAENLIAVMRSDGFDYLREHCPSLQSELLKTVAGCEEELSGGGGKTRSVWGQFSDGGAETNGRQAQTWGDINGGAERSQSVWVEVVNANGSGRNNNDNNNSDDPMAELED</sequence>